<name>DCUP_NITEU</name>
<reference key="1">
    <citation type="journal article" date="2003" name="J. Bacteriol.">
        <title>Complete genome sequence of the ammonia-oxidizing bacterium and obligate chemolithoautotroph Nitrosomonas europaea.</title>
        <authorList>
            <person name="Chain P."/>
            <person name="Lamerdin J.E."/>
            <person name="Larimer F.W."/>
            <person name="Regala W."/>
            <person name="Lao V."/>
            <person name="Land M.L."/>
            <person name="Hauser L."/>
            <person name="Hooper A.B."/>
            <person name="Klotz M.G."/>
            <person name="Norton J."/>
            <person name="Sayavedra-Soto L.A."/>
            <person name="Arciero D.M."/>
            <person name="Hommes N.G."/>
            <person name="Whittaker M.M."/>
            <person name="Arp D.J."/>
        </authorList>
    </citation>
    <scope>NUCLEOTIDE SEQUENCE [LARGE SCALE GENOMIC DNA]</scope>
    <source>
        <strain>ATCC 19718 / CIP 103999 / KCTC 2705 / NBRC 14298</strain>
    </source>
</reference>
<keyword id="KW-0963">Cytoplasm</keyword>
<keyword id="KW-0210">Decarboxylase</keyword>
<keyword id="KW-0456">Lyase</keyword>
<keyword id="KW-0627">Porphyrin biosynthesis</keyword>
<keyword id="KW-1185">Reference proteome</keyword>
<evidence type="ECO:0000255" key="1">
    <source>
        <dbReference type="HAMAP-Rule" id="MF_00218"/>
    </source>
</evidence>
<dbReference type="EC" id="4.1.1.37" evidence="1"/>
<dbReference type="EMBL" id="AL954747">
    <property type="protein sequence ID" value="CAD84356.1"/>
    <property type="molecule type" value="Genomic_DNA"/>
</dbReference>
<dbReference type="RefSeq" id="WP_011111080.1">
    <property type="nucleotide sequence ID" value="NC_004757.1"/>
</dbReference>
<dbReference type="SMR" id="Q82X50"/>
<dbReference type="STRING" id="228410.NE0445"/>
<dbReference type="GeneID" id="87103654"/>
<dbReference type="KEGG" id="neu:NE0445"/>
<dbReference type="eggNOG" id="COG0407">
    <property type="taxonomic scope" value="Bacteria"/>
</dbReference>
<dbReference type="HOGENOM" id="CLU_040933_0_0_4"/>
<dbReference type="OrthoDB" id="9806656at2"/>
<dbReference type="PhylomeDB" id="Q82X50"/>
<dbReference type="UniPathway" id="UPA00251">
    <property type="reaction ID" value="UER00321"/>
</dbReference>
<dbReference type="Proteomes" id="UP000001416">
    <property type="component" value="Chromosome"/>
</dbReference>
<dbReference type="GO" id="GO:0005829">
    <property type="term" value="C:cytosol"/>
    <property type="evidence" value="ECO:0007669"/>
    <property type="project" value="TreeGrafter"/>
</dbReference>
<dbReference type="GO" id="GO:0004853">
    <property type="term" value="F:uroporphyrinogen decarboxylase activity"/>
    <property type="evidence" value="ECO:0007669"/>
    <property type="project" value="UniProtKB-UniRule"/>
</dbReference>
<dbReference type="GO" id="GO:0019353">
    <property type="term" value="P:protoporphyrinogen IX biosynthetic process from glutamate"/>
    <property type="evidence" value="ECO:0007669"/>
    <property type="project" value="TreeGrafter"/>
</dbReference>
<dbReference type="CDD" id="cd00717">
    <property type="entry name" value="URO-D"/>
    <property type="match status" value="1"/>
</dbReference>
<dbReference type="FunFam" id="3.20.20.210:FF:000001">
    <property type="entry name" value="Uroporphyrinogen decarboxylase"/>
    <property type="match status" value="1"/>
</dbReference>
<dbReference type="Gene3D" id="3.20.20.210">
    <property type="match status" value="1"/>
</dbReference>
<dbReference type="HAMAP" id="MF_00218">
    <property type="entry name" value="URO_D"/>
    <property type="match status" value="1"/>
</dbReference>
<dbReference type="InterPro" id="IPR038071">
    <property type="entry name" value="UROD/MetE-like_sf"/>
</dbReference>
<dbReference type="InterPro" id="IPR006361">
    <property type="entry name" value="Uroporphyrinogen_deCO2ase_HemE"/>
</dbReference>
<dbReference type="InterPro" id="IPR000257">
    <property type="entry name" value="Uroporphyrinogen_deCOase"/>
</dbReference>
<dbReference type="NCBIfam" id="TIGR01464">
    <property type="entry name" value="hemE"/>
    <property type="match status" value="1"/>
</dbReference>
<dbReference type="PANTHER" id="PTHR21091">
    <property type="entry name" value="METHYLTETRAHYDROFOLATE:HOMOCYSTEINE METHYLTRANSFERASE RELATED"/>
    <property type="match status" value="1"/>
</dbReference>
<dbReference type="PANTHER" id="PTHR21091:SF169">
    <property type="entry name" value="UROPORPHYRINOGEN DECARBOXYLASE"/>
    <property type="match status" value="1"/>
</dbReference>
<dbReference type="Pfam" id="PF01208">
    <property type="entry name" value="URO-D"/>
    <property type="match status" value="1"/>
</dbReference>
<dbReference type="SUPFAM" id="SSF51726">
    <property type="entry name" value="UROD/MetE-like"/>
    <property type="match status" value="1"/>
</dbReference>
<dbReference type="PROSITE" id="PS00906">
    <property type="entry name" value="UROD_1"/>
    <property type="match status" value="1"/>
</dbReference>
<dbReference type="PROSITE" id="PS00907">
    <property type="entry name" value="UROD_2"/>
    <property type="match status" value="1"/>
</dbReference>
<gene>
    <name evidence="1" type="primary">hemE</name>
    <name type="ordered locus">NE0445</name>
</gene>
<proteinExistence type="inferred from homology"/>
<organism>
    <name type="scientific">Nitrosomonas europaea (strain ATCC 19718 / CIP 103999 / KCTC 2705 / NBRC 14298)</name>
    <dbReference type="NCBI Taxonomy" id="228410"/>
    <lineage>
        <taxon>Bacteria</taxon>
        <taxon>Pseudomonadati</taxon>
        <taxon>Pseudomonadota</taxon>
        <taxon>Betaproteobacteria</taxon>
        <taxon>Nitrosomonadales</taxon>
        <taxon>Nitrosomonadaceae</taxon>
        <taxon>Nitrosomonas</taxon>
    </lineage>
</organism>
<feature type="chain" id="PRO_0000187619" description="Uroporphyrinogen decarboxylase">
    <location>
        <begin position="1"/>
        <end position="355"/>
    </location>
</feature>
<feature type="binding site" evidence="1">
    <location>
        <begin position="27"/>
        <end position="31"/>
    </location>
    <ligand>
        <name>substrate</name>
    </ligand>
</feature>
<feature type="binding site" evidence="1">
    <location>
        <position position="46"/>
    </location>
    <ligand>
        <name>substrate</name>
    </ligand>
</feature>
<feature type="binding site" evidence="1">
    <location>
        <position position="77"/>
    </location>
    <ligand>
        <name>substrate</name>
    </ligand>
</feature>
<feature type="binding site" evidence="1">
    <location>
        <position position="154"/>
    </location>
    <ligand>
        <name>substrate</name>
    </ligand>
</feature>
<feature type="binding site" evidence="1">
    <location>
        <position position="209"/>
    </location>
    <ligand>
        <name>substrate</name>
    </ligand>
</feature>
<feature type="binding site" evidence="1">
    <location>
        <position position="327"/>
    </location>
    <ligand>
        <name>substrate</name>
    </ligand>
</feature>
<feature type="site" description="Transition state stabilizer" evidence="1">
    <location>
        <position position="77"/>
    </location>
</feature>
<sequence>MTKLENDTFIRALLRQPVDYTPVWMMRQAGRYLPEYNQTRARAGSFLSLCKNPDFATEVTLQPLARFSLDAAILFSDILTIPDAMGLGLYFADGEGPRFERPLREEREIRSLIVPDPDTHLRYVTDAVRQIRTALNNRVPLIGFSGSPFTLACYMVEGAGSSEFRQIKTMLYARPDLLHHILGVTAQAVTAYLNAQIEAGAQAVMIFDSWGGALSHAAYQEFSLRYMNQILDGLKREHNGDRIPNILFTKGGGLWLESIMASGCDAIGLDWTIDIGEARRRTQDKVALQGNLDPAVLFSSPEVIAAEAGKILASYGHGHGHVFNLGHGISQFTPPENALALIEAVHAQSVRYHTD</sequence>
<protein>
    <recommendedName>
        <fullName evidence="1">Uroporphyrinogen decarboxylase</fullName>
        <shortName evidence="1">UPD</shortName>
        <shortName evidence="1">URO-D</shortName>
        <ecNumber evidence="1">4.1.1.37</ecNumber>
    </recommendedName>
</protein>
<comment type="function">
    <text evidence="1">Catalyzes the decarboxylation of four acetate groups of uroporphyrinogen-III to yield coproporphyrinogen-III.</text>
</comment>
<comment type="catalytic activity">
    <reaction evidence="1">
        <text>uroporphyrinogen III + 4 H(+) = coproporphyrinogen III + 4 CO2</text>
        <dbReference type="Rhea" id="RHEA:19865"/>
        <dbReference type="ChEBI" id="CHEBI:15378"/>
        <dbReference type="ChEBI" id="CHEBI:16526"/>
        <dbReference type="ChEBI" id="CHEBI:57308"/>
        <dbReference type="ChEBI" id="CHEBI:57309"/>
        <dbReference type="EC" id="4.1.1.37"/>
    </reaction>
</comment>
<comment type="pathway">
    <text evidence="1">Porphyrin-containing compound metabolism; protoporphyrin-IX biosynthesis; coproporphyrinogen-III from 5-aminolevulinate: step 4/4.</text>
</comment>
<comment type="subunit">
    <text evidence="1">Homodimer.</text>
</comment>
<comment type="subcellular location">
    <subcellularLocation>
        <location evidence="1">Cytoplasm</location>
    </subcellularLocation>
</comment>
<comment type="similarity">
    <text evidence="1">Belongs to the uroporphyrinogen decarboxylase family.</text>
</comment>
<accession>Q82X50</accession>